<comment type="similarity">
    <text evidence="1">Belongs to the UPF0102 family.</text>
</comment>
<gene>
    <name type="ordered locus">TW312</name>
</gene>
<proteinExistence type="inferred from homology"/>
<dbReference type="EMBL" id="BX251411">
    <property type="protein sequence ID" value="CAD66985.1"/>
    <property type="molecule type" value="Genomic_DNA"/>
</dbReference>
<dbReference type="SMR" id="Q83I01"/>
<dbReference type="KEGG" id="tws:TW312"/>
<dbReference type="HOGENOM" id="CLU_115353_3_2_11"/>
<dbReference type="GO" id="GO:0003676">
    <property type="term" value="F:nucleic acid binding"/>
    <property type="evidence" value="ECO:0007669"/>
    <property type="project" value="InterPro"/>
</dbReference>
<dbReference type="Gene3D" id="3.40.1350.10">
    <property type="match status" value="1"/>
</dbReference>
<dbReference type="HAMAP" id="MF_00048">
    <property type="entry name" value="UPF0102"/>
    <property type="match status" value="1"/>
</dbReference>
<dbReference type="InterPro" id="IPR011335">
    <property type="entry name" value="Restrct_endonuc-II-like"/>
</dbReference>
<dbReference type="InterPro" id="IPR011856">
    <property type="entry name" value="tRNA_endonuc-like_dom_sf"/>
</dbReference>
<dbReference type="InterPro" id="IPR003509">
    <property type="entry name" value="UPF0102_YraN-like"/>
</dbReference>
<dbReference type="NCBIfam" id="NF009152">
    <property type="entry name" value="PRK12497.2-4"/>
    <property type="match status" value="1"/>
</dbReference>
<dbReference type="PANTHER" id="PTHR34039">
    <property type="entry name" value="UPF0102 PROTEIN YRAN"/>
    <property type="match status" value="1"/>
</dbReference>
<dbReference type="PANTHER" id="PTHR34039:SF1">
    <property type="entry name" value="UPF0102 PROTEIN YRAN"/>
    <property type="match status" value="1"/>
</dbReference>
<dbReference type="Pfam" id="PF02021">
    <property type="entry name" value="UPF0102"/>
    <property type="match status" value="1"/>
</dbReference>
<dbReference type="SUPFAM" id="SSF52980">
    <property type="entry name" value="Restriction endonuclease-like"/>
    <property type="match status" value="1"/>
</dbReference>
<organism>
    <name type="scientific">Tropheryma whipplei (strain TW08/27)</name>
    <name type="common">Whipple's bacillus</name>
    <dbReference type="NCBI Taxonomy" id="218496"/>
    <lineage>
        <taxon>Bacteria</taxon>
        <taxon>Bacillati</taxon>
        <taxon>Actinomycetota</taxon>
        <taxon>Actinomycetes</taxon>
        <taxon>Micrococcales</taxon>
        <taxon>Tropherymataceae</taxon>
        <taxon>Tropheryma</taxon>
    </lineage>
</organism>
<accession>Q83I01</accession>
<sequence length="120" mass="13728">MTHDVSKYALGRIAEDKACNYLSVNGYIVLDRNWYCRFGELDIIARKNGVIVAVEVKGGKRNADYPICNITVKKLSKLTFLLKAWLHENKLNEFCIDLRIDAVSVTFIPELQIRHFVGIL</sequence>
<reference key="1">
    <citation type="journal article" date="2003" name="Lancet">
        <title>Sequencing and analysis of the genome of the Whipple's disease bacterium Tropheryma whipplei.</title>
        <authorList>
            <person name="Bentley S.D."/>
            <person name="Maiwald M."/>
            <person name="Murphy L.D."/>
            <person name="Pallen M.J."/>
            <person name="Yeats C.A."/>
            <person name="Dover L.G."/>
            <person name="Norbertczak H.T."/>
            <person name="Besra G.S."/>
            <person name="Quail M.A."/>
            <person name="Harris D.E."/>
            <person name="von Herbay A."/>
            <person name="Goble A."/>
            <person name="Rutter S."/>
            <person name="Squares R."/>
            <person name="Squares S."/>
            <person name="Barrell B.G."/>
            <person name="Parkhill J."/>
            <person name="Relman D.A."/>
        </authorList>
    </citation>
    <scope>NUCLEOTIDE SEQUENCE [LARGE SCALE GENOMIC DNA]</scope>
    <source>
        <strain>TW08/27</strain>
    </source>
</reference>
<feature type="chain" id="PRO_0000167386" description="UPF0102 protein TW312">
    <location>
        <begin position="1"/>
        <end position="120"/>
    </location>
</feature>
<protein>
    <recommendedName>
        <fullName evidence="1">UPF0102 protein TW312</fullName>
    </recommendedName>
</protein>
<evidence type="ECO:0000255" key="1">
    <source>
        <dbReference type="HAMAP-Rule" id="MF_00048"/>
    </source>
</evidence>
<name>Y312_TROW8</name>